<gene>
    <name evidence="2" type="primary">arcB</name>
    <name type="ordered locus">Ccur92_13560</name>
    <name type="ORF">CCV52592_0157</name>
</gene>
<sequence length="304" mass="34273">MRHFLTLDDFSKDEILQMINLAGKIKKEAKVREFKPYLKDQTLAMIFEKSSTRTRVSFEVGMYQLGGHALFLSANDLQIGRGEPIKDTARVISSMCDMAMLRVNRHETLEEFAKFSQNPVINGLSDKFHPVQLMADYLTMRERGSGEKIAYIGDGNNMAHSWLMLASKLGLELRIATPKGYEPDAKILEKAQQNAKISGAKIYLSNEPKEAVSGADVVTTDTWVSMGQEAQKEKRLREFAGFCVDENLMSLAAKNAIFLHCLPAYRGYEVSEAVFEAHADEIFAEAQNRLHAQKGVMVWLNDKR</sequence>
<organism>
    <name type="scientific">Campylobacter curvus (strain 525.92)</name>
    <dbReference type="NCBI Taxonomy" id="360105"/>
    <lineage>
        <taxon>Bacteria</taxon>
        <taxon>Pseudomonadati</taxon>
        <taxon>Campylobacterota</taxon>
        <taxon>Epsilonproteobacteria</taxon>
        <taxon>Campylobacterales</taxon>
        <taxon>Campylobacteraceae</taxon>
        <taxon>Campylobacter</taxon>
    </lineage>
</organism>
<evidence type="ECO:0000250" key="1"/>
<evidence type="ECO:0000255" key="2">
    <source>
        <dbReference type="HAMAP-Rule" id="MF_01109"/>
    </source>
</evidence>
<proteinExistence type="inferred from homology"/>
<comment type="function">
    <text evidence="1">Reversibly catalyzes the transfer of the carbamoyl group from carbamoyl phosphate (CP) to the N(epsilon) atom of ornithine (ORN) to produce L-citrulline.</text>
</comment>
<comment type="catalytic activity">
    <reaction evidence="2">
        <text>carbamoyl phosphate + L-ornithine = L-citrulline + phosphate + H(+)</text>
        <dbReference type="Rhea" id="RHEA:19513"/>
        <dbReference type="ChEBI" id="CHEBI:15378"/>
        <dbReference type="ChEBI" id="CHEBI:43474"/>
        <dbReference type="ChEBI" id="CHEBI:46911"/>
        <dbReference type="ChEBI" id="CHEBI:57743"/>
        <dbReference type="ChEBI" id="CHEBI:58228"/>
        <dbReference type="EC" id="2.1.3.3"/>
    </reaction>
</comment>
<comment type="pathway">
    <text evidence="2">Amino-acid degradation; L-arginine degradation via ADI pathway; carbamoyl phosphate from L-arginine: step 2/2.</text>
</comment>
<comment type="subcellular location">
    <subcellularLocation>
        <location evidence="2">Cytoplasm</location>
    </subcellularLocation>
</comment>
<comment type="similarity">
    <text evidence="2">Belongs to the aspartate/ornithine carbamoyltransferase superfamily. OTCase family.</text>
</comment>
<accession>A7GZL8</accession>
<reference key="1">
    <citation type="submission" date="2007-07" db="EMBL/GenBank/DDBJ databases">
        <title>Genome sequence of Campylobacter curvus 525.92 isolated from human feces.</title>
        <authorList>
            <person name="Fouts D.E."/>
            <person name="Mongodin E.F."/>
            <person name="Puiu D."/>
            <person name="Sebastian Y."/>
            <person name="Miller W.G."/>
            <person name="Mandrell R.E."/>
            <person name="Lastovica A.J."/>
            <person name="Nelson K.E."/>
        </authorList>
    </citation>
    <scope>NUCLEOTIDE SEQUENCE [LARGE SCALE GENOMIC DNA]</scope>
    <source>
        <strain>525.92</strain>
    </source>
</reference>
<name>OTC_CAMC5</name>
<dbReference type="EC" id="2.1.3.3" evidence="2"/>
<dbReference type="EMBL" id="CP000767">
    <property type="protein sequence ID" value="EAU01327.1"/>
    <property type="molecule type" value="Genomic_DNA"/>
</dbReference>
<dbReference type="SMR" id="A7GZL8"/>
<dbReference type="STRING" id="360105.CCV52592_0157"/>
<dbReference type="KEGG" id="ccv:CCV52592_0157"/>
<dbReference type="HOGENOM" id="CLU_043846_3_2_7"/>
<dbReference type="OrthoDB" id="9802587at2"/>
<dbReference type="UniPathway" id="UPA00254">
    <property type="reaction ID" value="UER00365"/>
</dbReference>
<dbReference type="Proteomes" id="UP000006380">
    <property type="component" value="Chromosome"/>
</dbReference>
<dbReference type="GO" id="GO:0005737">
    <property type="term" value="C:cytoplasm"/>
    <property type="evidence" value="ECO:0007669"/>
    <property type="project" value="UniProtKB-SubCell"/>
</dbReference>
<dbReference type="GO" id="GO:0016597">
    <property type="term" value="F:amino acid binding"/>
    <property type="evidence" value="ECO:0007669"/>
    <property type="project" value="InterPro"/>
</dbReference>
<dbReference type="GO" id="GO:0004585">
    <property type="term" value="F:ornithine carbamoyltransferase activity"/>
    <property type="evidence" value="ECO:0007669"/>
    <property type="project" value="UniProtKB-UniRule"/>
</dbReference>
<dbReference type="GO" id="GO:0042450">
    <property type="term" value="P:arginine biosynthetic process via ornithine"/>
    <property type="evidence" value="ECO:0007669"/>
    <property type="project" value="TreeGrafter"/>
</dbReference>
<dbReference type="GO" id="GO:0019547">
    <property type="term" value="P:arginine catabolic process to ornithine"/>
    <property type="evidence" value="ECO:0007669"/>
    <property type="project" value="UniProtKB-UniRule"/>
</dbReference>
<dbReference type="GO" id="GO:0019240">
    <property type="term" value="P:citrulline biosynthetic process"/>
    <property type="evidence" value="ECO:0007669"/>
    <property type="project" value="TreeGrafter"/>
</dbReference>
<dbReference type="FunFam" id="3.40.50.1370:FF:000008">
    <property type="entry name" value="Ornithine carbamoyltransferase"/>
    <property type="match status" value="1"/>
</dbReference>
<dbReference type="Gene3D" id="3.40.50.1370">
    <property type="entry name" value="Aspartate/ornithine carbamoyltransferase"/>
    <property type="match status" value="2"/>
</dbReference>
<dbReference type="HAMAP" id="MF_01109">
    <property type="entry name" value="OTCase"/>
    <property type="match status" value="1"/>
</dbReference>
<dbReference type="InterPro" id="IPR006132">
    <property type="entry name" value="Asp/Orn_carbamoyltranf_P-bd"/>
</dbReference>
<dbReference type="InterPro" id="IPR006130">
    <property type="entry name" value="Asp/Orn_carbamoylTrfase"/>
</dbReference>
<dbReference type="InterPro" id="IPR036901">
    <property type="entry name" value="Asp/Orn_carbamoylTrfase_sf"/>
</dbReference>
<dbReference type="InterPro" id="IPR006131">
    <property type="entry name" value="Asp_carbamoyltransf_Asp/Orn-bd"/>
</dbReference>
<dbReference type="InterPro" id="IPR002292">
    <property type="entry name" value="Orn/put_carbamltrans"/>
</dbReference>
<dbReference type="InterPro" id="IPR024904">
    <property type="entry name" value="OTCase_ArgI"/>
</dbReference>
<dbReference type="NCBIfam" id="TIGR00658">
    <property type="entry name" value="orni_carb_tr"/>
    <property type="match status" value="1"/>
</dbReference>
<dbReference type="NCBIfam" id="NF001986">
    <property type="entry name" value="PRK00779.1"/>
    <property type="match status" value="1"/>
</dbReference>
<dbReference type="PANTHER" id="PTHR45753">
    <property type="entry name" value="ORNITHINE CARBAMOYLTRANSFERASE, MITOCHONDRIAL"/>
    <property type="match status" value="1"/>
</dbReference>
<dbReference type="PANTHER" id="PTHR45753:SF3">
    <property type="entry name" value="ORNITHINE TRANSCARBAMYLASE, MITOCHONDRIAL"/>
    <property type="match status" value="1"/>
</dbReference>
<dbReference type="Pfam" id="PF00185">
    <property type="entry name" value="OTCace"/>
    <property type="match status" value="1"/>
</dbReference>
<dbReference type="Pfam" id="PF02729">
    <property type="entry name" value="OTCace_N"/>
    <property type="match status" value="1"/>
</dbReference>
<dbReference type="PRINTS" id="PR00100">
    <property type="entry name" value="AOTCASE"/>
</dbReference>
<dbReference type="PRINTS" id="PR00102">
    <property type="entry name" value="OTCASE"/>
</dbReference>
<dbReference type="SUPFAM" id="SSF53671">
    <property type="entry name" value="Aspartate/ornithine carbamoyltransferase"/>
    <property type="match status" value="1"/>
</dbReference>
<dbReference type="PROSITE" id="PS00097">
    <property type="entry name" value="CARBAMOYLTRANSFERASE"/>
    <property type="match status" value="1"/>
</dbReference>
<keyword id="KW-0056">Arginine metabolism</keyword>
<keyword id="KW-0963">Cytoplasm</keyword>
<keyword id="KW-1185">Reference proteome</keyword>
<keyword id="KW-0808">Transferase</keyword>
<protein>
    <recommendedName>
        <fullName evidence="2">Ornithine carbamoyltransferase</fullName>
        <shortName evidence="2">OTCase</shortName>
        <ecNumber evidence="2">2.1.3.3</ecNumber>
    </recommendedName>
</protein>
<feature type="chain" id="PRO_1000084838" description="Ornithine carbamoyltransferase">
    <location>
        <begin position="1"/>
        <end position="304"/>
    </location>
</feature>
<feature type="binding site" evidence="2">
    <location>
        <begin position="51"/>
        <end position="54"/>
    </location>
    <ligand>
        <name>carbamoyl phosphate</name>
        <dbReference type="ChEBI" id="CHEBI:58228"/>
    </ligand>
</feature>
<feature type="binding site" evidence="2">
    <location>
        <position position="78"/>
    </location>
    <ligand>
        <name>carbamoyl phosphate</name>
        <dbReference type="ChEBI" id="CHEBI:58228"/>
    </ligand>
</feature>
<feature type="binding site" evidence="2">
    <location>
        <position position="102"/>
    </location>
    <ligand>
        <name>carbamoyl phosphate</name>
        <dbReference type="ChEBI" id="CHEBI:58228"/>
    </ligand>
</feature>
<feature type="binding site" evidence="2">
    <location>
        <begin position="129"/>
        <end position="132"/>
    </location>
    <ligand>
        <name>carbamoyl phosphate</name>
        <dbReference type="ChEBI" id="CHEBI:58228"/>
    </ligand>
</feature>
<feature type="binding site" evidence="2">
    <location>
        <position position="157"/>
    </location>
    <ligand>
        <name>L-ornithine</name>
        <dbReference type="ChEBI" id="CHEBI:46911"/>
    </ligand>
</feature>
<feature type="binding site" evidence="2">
    <location>
        <position position="221"/>
    </location>
    <ligand>
        <name>L-ornithine</name>
        <dbReference type="ChEBI" id="CHEBI:46911"/>
    </ligand>
</feature>
<feature type="binding site" evidence="2">
    <location>
        <begin position="225"/>
        <end position="226"/>
    </location>
    <ligand>
        <name>L-ornithine</name>
        <dbReference type="ChEBI" id="CHEBI:46911"/>
    </ligand>
</feature>
<feature type="binding site" evidence="2">
    <location>
        <begin position="261"/>
        <end position="262"/>
    </location>
    <ligand>
        <name>carbamoyl phosphate</name>
        <dbReference type="ChEBI" id="CHEBI:58228"/>
    </ligand>
</feature>
<feature type="binding site" evidence="2">
    <location>
        <position position="289"/>
    </location>
    <ligand>
        <name>carbamoyl phosphate</name>
        <dbReference type="ChEBI" id="CHEBI:58228"/>
    </ligand>
</feature>